<feature type="chain" id="PRO_0000172663" description="Phosphatidylglycerol--prolipoprotein diacylglyceryl transferase">
    <location>
        <begin position="1"/>
        <end position="259"/>
    </location>
</feature>
<feature type="transmembrane region" description="Helical" evidence="1">
    <location>
        <begin position="9"/>
        <end position="29"/>
    </location>
</feature>
<feature type="transmembrane region" description="Helical" evidence="1">
    <location>
        <begin position="55"/>
        <end position="75"/>
    </location>
</feature>
<feature type="transmembrane region" description="Helical" evidence="1">
    <location>
        <begin position="92"/>
        <end position="112"/>
    </location>
</feature>
<feature type="transmembrane region" description="Helical" evidence="1">
    <location>
        <begin position="117"/>
        <end position="137"/>
    </location>
</feature>
<feature type="transmembrane region" description="Helical" evidence="1">
    <location>
        <begin position="172"/>
        <end position="192"/>
    </location>
</feature>
<feature type="transmembrane region" description="Helical" evidence="1">
    <location>
        <begin position="201"/>
        <end position="221"/>
    </location>
</feature>
<feature type="transmembrane region" description="Helical" evidence="1">
    <location>
        <begin position="228"/>
        <end position="248"/>
    </location>
</feature>
<feature type="binding site" evidence="1">
    <location>
        <position position="138"/>
    </location>
    <ligand>
        <name>a 1,2-diacyl-sn-glycero-3-phospho-(1'-sn-glycerol)</name>
        <dbReference type="ChEBI" id="CHEBI:64716"/>
    </ligand>
</feature>
<keyword id="KW-0997">Cell inner membrane</keyword>
<keyword id="KW-1003">Cell membrane</keyword>
<keyword id="KW-0472">Membrane</keyword>
<keyword id="KW-0808">Transferase</keyword>
<keyword id="KW-0812">Transmembrane</keyword>
<keyword id="KW-1133">Transmembrane helix</keyword>
<protein>
    <recommendedName>
        <fullName evidence="1">Phosphatidylglycerol--prolipoprotein diacylglyceryl transferase</fullName>
        <ecNumber evidence="1">2.5.1.145</ecNumber>
    </recommendedName>
</protein>
<sequence>MTFPNINPIIFSIGPLAISWYSLSYVIGILLGWFYANKIVEKFKPQITKKNLEDFITYAVIGIIVGGRLGFVLLYNPSRYFSNPIDILKTYEGGMSFHGGALGGIIAAYLFCRKYKINFLSLTDIIAPVVPIGLFLGRIANFINGELYGRITNSSFGMIFPNSDLMPRHPSQLYEAFFEGLVLFSILAYTTFKHKTLKKCGLNSGIFFTFYGLFRITIEIFREPDIQIGFILDSLTMGQILSVPMLLLGSYLICQSNPK</sequence>
<proteinExistence type="inferred from homology"/>
<name>LGT_RICCN</name>
<accession>Q92JJ5</accession>
<gene>
    <name evidence="1" type="primary">lgt</name>
    <name type="ordered locus">RC0072</name>
</gene>
<comment type="function">
    <text evidence="1">Catalyzes the transfer of the diacylglyceryl group from phosphatidylglycerol to the sulfhydryl group of the N-terminal cysteine of a prolipoprotein, the first step in the formation of mature lipoproteins.</text>
</comment>
<comment type="catalytic activity">
    <reaction evidence="1">
        <text>L-cysteinyl-[prolipoprotein] + a 1,2-diacyl-sn-glycero-3-phospho-(1'-sn-glycerol) = an S-1,2-diacyl-sn-glyceryl-L-cysteinyl-[prolipoprotein] + sn-glycerol 1-phosphate + H(+)</text>
        <dbReference type="Rhea" id="RHEA:56712"/>
        <dbReference type="Rhea" id="RHEA-COMP:14679"/>
        <dbReference type="Rhea" id="RHEA-COMP:14680"/>
        <dbReference type="ChEBI" id="CHEBI:15378"/>
        <dbReference type="ChEBI" id="CHEBI:29950"/>
        <dbReference type="ChEBI" id="CHEBI:57685"/>
        <dbReference type="ChEBI" id="CHEBI:64716"/>
        <dbReference type="ChEBI" id="CHEBI:140658"/>
        <dbReference type="EC" id="2.5.1.145"/>
    </reaction>
</comment>
<comment type="pathway">
    <text evidence="1">Protein modification; lipoprotein biosynthesis (diacylglyceryl transfer).</text>
</comment>
<comment type="subcellular location">
    <subcellularLocation>
        <location evidence="1">Cell inner membrane</location>
        <topology evidence="1">Multi-pass membrane protein</topology>
    </subcellularLocation>
</comment>
<comment type="similarity">
    <text evidence="1">Belongs to the Lgt family.</text>
</comment>
<reference key="1">
    <citation type="journal article" date="2001" name="Science">
        <title>Mechanisms of evolution in Rickettsia conorii and R. prowazekii.</title>
        <authorList>
            <person name="Ogata H."/>
            <person name="Audic S."/>
            <person name="Renesto-Audiffren P."/>
            <person name="Fournier P.-E."/>
            <person name="Barbe V."/>
            <person name="Samson D."/>
            <person name="Roux V."/>
            <person name="Cossart P."/>
            <person name="Weissenbach J."/>
            <person name="Claverie J.-M."/>
            <person name="Raoult D."/>
        </authorList>
    </citation>
    <scope>NUCLEOTIDE SEQUENCE [LARGE SCALE GENOMIC DNA]</scope>
    <source>
        <strain>ATCC VR-613 / Malish 7</strain>
    </source>
</reference>
<organism>
    <name type="scientific">Rickettsia conorii (strain ATCC VR-613 / Malish 7)</name>
    <dbReference type="NCBI Taxonomy" id="272944"/>
    <lineage>
        <taxon>Bacteria</taxon>
        <taxon>Pseudomonadati</taxon>
        <taxon>Pseudomonadota</taxon>
        <taxon>Alphaproteobacteria</taxon>
        <taxon>Rickettsiales</taxon>
        <taxon>Rickettsiaceae</taxon>
        <taxon>Rickettsieae</taxon>
        <taxon>Rickettsia</taxon>
        <taxon>spotted fever group</taxon>
    </lineage>
</organism>
<dbReference type="EC" id="2.5.1.145" evidence="1"/>
<dbReference type="EMBL" id="AE006914">
    <property type="protein sequence ID" value="AAL02610.1"/>
    <property type="molecule type" value="Genomic_DNA"/>
</dbReference>
<dbReference type="PIR" id="H97708">
    <property type="entry name" value="H97708"/>
</dbReference>
<dbReference type="RefSeq" id="WP_010976757.1">
    <property type="nucleotide sequence ID" value="NC_003103.1"/>
</dbReference>
<dbReference type="SMR" id="Q92JJ5"/>
<dbReference type="GeneID" id="928588"/>
<dbReference type="KEGG" id="rco:RC0072"/>
<dbReference type="PATRIC" id="fig|272944.4.peg.85"/>
<dbReference type="HOGENOM" id="CLU_013386_1_0_5"/>
<dbReference type="UniPathway" id="UPA00664"/>
<dbReference type="Proteomes" id="UP000000816">
    <property type="component" value="Chromosome"/>
</dbReference>
<dbReference type="GO" id="GO:0005886">
    <property type="term" value="C:plasma membrane"/>
    <property type="evidence" value="ECO:0007669"/>
    <property type="project" value="UniProtKB-SubCell"/>
</dbReference>
<dbReference type="GO" id="GO:0008961">
    <property type="term" value="F:phosphatidylglycerol-prolipoprotein diacylglyceryl transferase activity"/>
    <property type="evidence" value="ECO:0007669"/>
    <property type="project" value="UniProtKB-UniRule"/>
</dbReference>
<dbReference type="GO" id="GO:0042158">
    <property type="term" value="P:lipoprotein biosynthetic process"/>
    <property type="evidence" value="ECO:0007669"/>
    <property type="project" value="UniProtKB-UniRule"/>
</dbReference>
<dbReference type="HAMAP" id="MF_01147">
    <property type="entry name" value="Lgt"/>
    <property type="match status" value="1"/>
</dbReference>
<dbReference type="InterPro" id="IPR001640">
    <property type="entry name" value="Lgt"/>
</dbReference>
<dbReference type="NCBIfam" id="TIGR00544">
    <property type="entry name" value="lgt"/>
    <property type="match status" value="1"/>
</dbReference>
<dbReference type="PANTHER" id="PTHR30589:SF0">
    <property type="entry name" value="PHOSPHATIDYLGLYCEROL--PROLIPOPROTEIN DIACYLGLYCERYL TRANSFERASE"/>
    <property type="match status" value="1"/>
</dbReference>
<dbReference type="PANTHER" id="PTHR30589">
    <property type="entry name" value="PROLIPOPROTEIN DIACYLGLYCERYL TRANSFERASE"/>
    <property type="match status" value="1"/>
</dbReference>
<dbReference type="Pfam" id="PF01790">
    <property type="entry name" value="LGT"/>
    <property type="match status" value="1"/>
</dbReference>
<dbReference type="PROSITE" id="PS01311">
    <property type="entry name" value="LGT"/>
    <property type="match status" value="1"/>
</dbReference>
<evidence type="ECO:0000255" key="1">
    <source>
        <dbReference type="HAMAP-Rule" id="MF_01147"/>
    </source>
</evidence>